<reference key="1">
    <citation type="journal article" date="2003" name="Proc. Natl. Acad. Sci. U.S.A.">
        <title>Complete genome sequence of the Q-fever pathogen, Coxiella burnetii.</title>
        <authorList>
            <person name="Seshadri R."/>
            <person name="Paulsen I.T."/>
            <person name="Eisen J.A."/>
            <person name="Read T.D."/>
            <person name="Nelson K.E."/>
            <person name="Nelson W.C."/>
            <person name="Ward N.L."/>
            <person name="Tettelin H."/>
            <person name="Davidsen T.M."/>
            <person name="Beanan M.J."/>
            <person name="DeBoy R.T."/>
            <person name="Daugherty S.C."/>
            <person name="Brinkac L.M."/>
            <person name="Madupu R."/>
            <person name="Dodson R.J."/>
            <person name="Khouri H.M."/>
            <person name="Lee K.H."/>
            <person name="Carty H.A."/>
            <person name="Scanlan D."/>
            <person name="Heinzen R.A."/>
            <person name="Thompson H.A."/>
            <person name="Samuel J.E."/>
            <person name="Fraser C.M."/>
            <person name="Heidelberg J.F."/>
        </authorList>
    </citation>
    <scope>NUCLEOTIDE SEQUENCE [LARGE SCALE GENOMIC DNA]</scope>
    <source>
        <strain>RSA 493 / Nine Mile phase I</strain>
    </source>
</reference>
<proteinExistence type="inferred from homology"/>
<comment type="function">
    <text evidence="1">An accessory protein needed during the final step in the assembly of 30S ribosomal subunit, possibly for assembly of the head region. Essential for efficient processing of 16S rRNA. May be needed both before and after RbfA during the maturation of 16S rRNA. It has affinity for free ribosomal 30S subunits but not for 70S ribosomes.</text>
</comment>
<comment type="subunit">
    <text evidence="1">Binds ribosomal protein uS19.</text>
</comment>
<comment type="subcellular location">
    <subcellularLocation>
        <location evidence="1">Cytoplasm</location>
    </subcellularLocation>
</comment>
<comment type="domain">
    <text evidence="1">The PRC barrel domain binds ribosomal protein uS19.</text>
</comment>
<comment type="similarity">
    <text evidence="1">Belongs to the RimM family.</text>
</comment>
<protein>
    <recommendedName>
        <fullName evidence="1">Ribosome maturation factor RimM</fullName>
    </recommendedName>
</protein>
<evidence type="ECO:0000255" key="1">
    <source>
        <dbReference type="HAMAP-Rule" id="MF_00014"/>
    </source>
</evidence>
<name>RIMM_COXBU</name>
<organism>
    <name type="scientific">Coxiella burnetii (strain RSA 493 / Nine Mile phase I)</name>
    <dbReference type="NCBI Taxonomy" id="227377"/>
    <lineage>
        <taxon>Bacteria</taxon>
        <taxon>Pseudomonadati</taxon>
        <taxon>Pseudomonadota</taxon>
        <taxon>Gammaproteobacteria</taxon>
        <taxon>Legionellales</taxon>
        <taxon>Coxiellaceae</taxon>
        <taxon>Coxiella</taxon>
    </lineage>
</organism>
<dbReference type="EMBL" id="AE016828">
    <property type="protein sequence ID" value="AAO89995.1"/>
    <property type="molecule type" value="Genomic_DNA"/>
</dbReference>
<dbReference type="RefSeq" id="NP_819481.1">
    <property type="nucleotide sequence ID" value="NC_002971.4"/>
</dbReference>
<dbReference type="RefSeq" id="WP_010957579.1">
    <property type="nucleotide sequence ID" value="NZ_CCYB01000054.1"/>
</dbReference>
<dbReference type="SMR" id="Q83E84"/>
<dbReference type="STRING" id="227377.CBU_0444"/>
<dbReference type="DNASU" id="1208328"/>
<dbReference type="EnsemblBacteria" id="AAO89995">
    <property type="protein sequence ID" value="AAO89995"/>
    <property type="gene ID" value="CBU_0444"/>
</dbReference>
<dbReference type="GeneID" id="1208328"/>
<dbReference type="KEGG" id="cbu:CBU_0444"/>
<dbReference type="PATRIC" id="fig|227377.7.peg.435"/>
<dbReference type="eggNOG" id="COG0806">
    <property type="taxonomic scope" value="Bacteria"/>
</dbReference>
<dbReference type="HOGENOM" id="CLU_077636_1_0_6"/>
<dbReference type="OrthoDB" id="9783509at2"/>
<dbReference type="Proteomes" id="UP000002671">
    <property type="component" value="Chromosome"/>
</dbReference>
<dbReference type="GO" id="GO:0005829">
    <property type="term" value="C:cytosol"/>
    <property type="evidence" value="ECO:0000318"/>
    <property type="project" value="GO_Central"/>
</dbReference>
<dbReference type="GO" id="GO:0005840">
    <property type="term" value="C:ribosome"/>
    <property type="evidence" value="ECO:0007669"/>
    <property type="project" value="InterPro"/>
</dbReference>
<dbReference type="GO" id="GO:0043022">
    <property type="term" value="F:ribosome binding"/>
    <property type="evidence" value="ECO:0007669"/>
    <property type="project" value="InterPro"/>
</dbReference>
<dbReference type="GO" id="GO:0030490">
    <property type="term" value="P:maturation of SSU-rRNA"/>
    <property type="evidence" value="ECO:0000318"/>
    <property type="project" value="GO_Central"/>
</dbReference>
<dbReference type="Gene3D" id="2.30.30.240">
    <property type="entry name" value="PRC-barrel domain"/>
    <property type="match status" value="1"/>
</dbReference>
<dbReference type="Gene3D" id="2.40.30.60">
    <property type="entry name" value="RimM"/>
    <property type="match status" value="1"/>
</dbReference>
<dbReference type="HAMAP" id="MF_00014">
    <property type="entry name" value="Ribosome_mat_RimM"/>
    <property type="match status" value="1"/>
</dbReference>
<dbReference type="InterPro" id="IPR011033">
    <property type="entry name" value="PRC_barrel-like_sf"/>
</dbReference>
<dbReference type="InterPro" id="IPR056792">
    <property type="entry name" value="PRC_RimM"/>
</dbReference>
<dbReference type="InterPro" id="IPR011961">
    <property type="entry name" value="RimM"/>
</dbReference>
<dbReference type="InterPro" id="IPR002676">
    <property type="entry name" value="RimM_N"/>
</dbReference>
<dbReference type="InterPro" id="IPR036976">
    <property type="entry name" value="RimM_N_sf"/>
</dbReference>
<dbReference type="InterPro" id="IPR009000">
    <property type="entry name" value="Transl_B-barrel_sf"/>
</dbReference>
<dbReference type="NCBIfam" id="TIGR02273">
    <property type="entry name" value="16S_RimM"/>
    <property type="match status" value="1"/>
</dbReference>
<dbReference type="PANTHER" id="PTHR33692">
    <property type="entry name" value="RIBOSOME MATURATION FACTOR RIMM"/>
    <property type="match status" value="1"/>
</dbReference>
<dbReference type="PANTHER" id="PTHR33692:SF1">
    <property type="entry name" value="RIBOSOME MATURATION FACTOR RIMM"/>
    <property type="match status" value="1"/>
</dbReference>
<dbReference type="Pfam" id="PF24986">
    <property type="entry name" value="PRC_RimM"/>
    <property type="match status" value="1"/>
</dbReference>
<dbReference type="Pfam" id="PF01782">
    <property type="entry name" value="RimM"/>
    <property type="match status" value="1"/>
</dbReference>
<dbReference type="SUPFAM" id="SSF50346">
    <property type="entry name" value="PRC-barrel domain"/>
    <property type="match status" value="1"/>
</dbReference>
<dbReference type="SUPFAM" id="SSF50447">
    <property type="entry name" value="Translation proteins"/>
    <property type="match status" value="1"/>
</dbReference>
<gene>
    <name evidence="1" type="primary">rimM</name>
    <name type="ordered locus">CBU_0444</name>
</gene>
<sequence length="168" mass="19181">MKPNDKVIIGRLARPYGLRGWIKVVSFTHPIDNLLNHPTWQIQHNNEWQPLKLQAGKLHEPFLVVKLENIDDPETAKHYTNDLIAIERGALGALKEGDYYWTDLIGLAVVNTHGIELGTVDSLIETGSNDVLVVRSKERERLIPYTSYTIQSIDLEKKIIVVEWDADF</sequence>
<accession>Q83E84</accession>
<keyword id="KW-0143">Chaperone</keyword>
<keyword id="KW-0963">Cytoplasm</keyword>
<keyword id="KW-1185">Reference proteome</keyword>
<keyword id="KW-0690">Ribosome biogenesis</keyword>
<keyword id="KW-0698">rRNA processing</keyword>
<feature type="chain" id="PRO_0000163283" description="Ribosome maturation factor RimM">
    <location>
        <begin position="1"/>
        <end position="168"/>
    </location>
</feature>
<feature type="domain" description="PRC barrel" evidence="1">
    <location>
        <begin position="96"/>
        <end position="168"/>
    </location>
</feature>